<evidence type="ECO:0000255" key="1"/>
<evidence type="ECO:0000256" key="2">
    <source>
        <dbReference type="SAM" id="MobiDB-lite"/>
    </source>
</evidence>
<evidence type="ECO:0000269" key="3">
    <source>
    </source>
</evidence>
<evidence type="ECO:0000303" key="4">
    <source>
    </source>
</evidence>
<evidence type="ECO:0000305" key="5"/>
<feature type="chain" id="PRO_0000089251" description="Transmembrane protein 183A">
    <location>
        <begin position="1"/>
        <end position="376"/>
    </location>
</feature>
<feature type="transmembrane region" description="Helical" evidence="1">
    <location>
        <begin position="300"/>
        <end position="320"/>
    </location>
</feature>
<feature type="region of interest" description="Disordered" evidence="2">
    <location>
        <begin position="1"/>
        <end position="20"/>
    </location>
</feature>
<feature type="region of interest" description="Disordered" evidence="2">
    <location>
        <begin position="100"/>
        <end position="127"/>
    </location>
</feature>
<feature type="splice variant" id="VSP_015084" description="In isoform 2." evidence="4">
    <location>
        <begin position="237"/>
        <end position="376"/>
    </location>
</feature>
<feature type="sequence variant" id="VAR_023205" description="In dbSNP:rs11558253." evidence="3">
    <original>R</original>
    <variation>M</variation>
    <location>
        <position position="10"/>
    </location>
</feature>
<feature type="sequence variant" id="VAR_023206" description="In dbSNP:rs6678040." evidence="3">
    <original>A</original>
    <variation>T</variation>
    <location>
        <position position="80"/>
    </location>
</feature>
<feature type="sequence conflict" description="In Ref. 3; AAH67775." evidence="5" ref="3">
    <original>V</original>
    <variation>I</variation>
    <location>
        <position position="59"/>
    </location>
</feature>
<reference key="1">
    <citation type="journal article" date="2004" name="Nat. Genet.">
        <title>Complete sequencing and characterization of 21,243 full-length human cDNAs.</title>
        <authorList>
            <person name="Ota T."/>
            <person name="Suzuki Y."/>
            <person name="Nishikawa T."/>
            <person name="Otsuki T."/>
            <person name="Sugiyama T."/>
            <person name="Irie R."/>
            <person name="Wakamatsu A."/>
            <person name="Hayashi K."/>
            <person name="Sato H."/>
            <person name="Nagai K."/>
            <person name="Kimura K."/>
            <person name="Makita H."/>
            <person name="Sekine M."/>
            <person name="Obayashi M."/>
            <person name="Nishi T."/>
            <person name="Shibahara T."/>
            <person name="Tanaka T."/>
            <person name="Ishii S."/>
            <person name="Yamamoto J."/>
            <person name="Saito K."/>
            <person name="Kawai Y."/>
            <person name="Isono Y."/>
            <person name="Nakamura Y."/>
            <person name="Nagahari K."/>
            <person name="Murakami K."/>
            <person name="Yasuda T."/>
            <person name="Iwayanagi T."/>
            <person name="Wagatsuma M."/>
            <person name="Shiratori A."/>
            <person name="Sudo H."/>
            <person name="Hosoiri T."/>
            <person name="Kaku Y."/>
            <person name="Kodaira H."/>
            <person name="Kondo H."/>
            <person name="Sugawara M."/>
            <person name="Takahashi M."/>
            <person name="Kanda K."/>
            <person name="Yokoi T."/>
            <person name="Furuya T."/>
            <person name="Kikkawa E."/>
            <person name="Omura Y."/>
            <person name="Abe K."/>
            <person name="Kamihara K."/>
            <person name="Katsuta N."/>
            <person name="Sato K."/>
            <person name="Tanikawa M."/>
            <person name="Yamazaki M."/>
            <person name="Ninomiya K."/>
            <person name="Ishibashi T."/>
            <person name="Yamashita H."/>
            <person name="Murakawa K."/>
            <person name="Fujimori K."/>
            <person name="Tanai H."/>
            <person name="Kimata M."/>
            <person name="Watanabe M."/>
            <person name="Hiraoka S."/>
            <person name="Chiba Y."/>
            <person name="Ishida S."/>
            <person name="Ono Y."/>
            <person name="Takiguchi S."/>
            <person name="Watanabe S."/>
            <person name="Yosida M."/>
            <person name="Hotuta T."/>
            <person name="Kusano J."/>
            <person name="Kanehori K."/>
            <person name="Takahashi-Fujii A."/>
            <person name="Hara H."/>
            <person name="Tanase T.-O."/>
            <person name="Nomura Y."/>
            <person name="Togiya S."/>
            <person name="Komai F."/>
            <person name="Hara R."/>
            <person name="Takeuchi K."/>
            <person name="Arita M."/>
            <person name="Imose N."/>
            <person name="Musashino K."/>
            <person name="Yuuki H."/>
            <person name="Oshima A."/>
            <person name="Sasaki N."/>
            <person name="Aotsuka S."/>
            <person name="Yoshikawa Y."/>
            <person name="Matsunawa H."/>
            <person name="Ichihara T."/>
            <person name="Shiohata N."/>
            <person name="Sano S."/>
            <person name="Moriya S."/>
            <person name="Momiyama H."/>
            <person name="Satoh N."/>
            <person name="Takami S."/>
            <person name="Terashima Y."/>
            <person name="Suzuki O."/>
            <person name="Nakagawa S."/>
            <person name="Senoh A."/>
            <person name="Mizoguchi H."/>
            <person name="Goto Y."/>
            <person name="Shimizu F."/>
            <person name="Wakebe H."/>
            <person name="Hishigaki H."/>
            <person name="Watanabe T."/>
            <person name="Sugiyama A."/>
            <person name="Takemoto M."/>
            <person name="Kawakami B."/>
            <person name="Yamazaki M."/>
            <person name="Watanabe K."/>
            <person name="Kumagai A."/>
            <person name="Itakura S."/>
            <person name="Fukuzumi Y."/>
            <person name="Fujimori Y."/>
            <person name="Komiyama M."/>
            <person name="Tashiro H."/>
            <person name="Tanigami A."/>
            <person name="Fujiwara T."/>
            <person name="Ono T."/>
            <person name="Yamada K."/>
            <person name="Fujii Y."/>
            <person name="Ozaki K."/>
            <person name="Hirao M."/>
            <person name="Ohmori Y."/>
            <person name="Kawabata A."/>
            <person name="Hikiji T."/>
            <person name="Kobatake N."/>
            <person name="Inagaki H."/>
            <person name="Ikema Y."/>
            <person name="Okamoto S."/>
            <person name="Okitani R."/>
            <person name="Kawakami T."/>
            <person name="Noguchi S."/>
            <person name="Itoh T."/>
            <person name="Shigeta K."/>
            <person name="Senba T."/>
            <person name="Matsumura K."/>
            <person name="Nakajima Y."/>
            <person name="Mizuno T."/>
            <person name="Morinaga M."/>
            <person name="Sasaki M."/>
            <person name="Togashi T."/>
            <person name="Oyama M."/>
            <person name="Hata H."/>
            <person name="Watanabe M."/>
            <person name="Komatsu T."/>
            <person name="Mizushima-Sugano J."/>
            <person name="Satoh T."/>
            <person name="Shirai Y."/>
            <person name="Takahashi Y."/>
            <person name="Nakagawa K."/>
            <person name="Okumura K."/>
            <person name="Nagase T."/>
            <person name="Nomura N."/>
            <person name="Kikuchi H."/>
            <person name="Masuho Y."/>
            <person name="Yamashita R."/>
            <person name="Nakai K."/>
            <person name="Yada T."/>
            <person name="Nakamura Y."/>
            <person name="Ohara O."/>
            <person name="Isogai T."/>
            <person name="Sugano S."/>
        </authorList>
    </citation>
    <scope>NUCLEOTIDE SEQUENCE [LARGE SCALE MRNA] (ISOFORM 1)</scope>
    <source>
        <tissue>Brain</tissue>
        <tissue>Urinary bladder</tissue>
    </source>
</reference>
<reference key="2">
    <citation type="submission" date="2005-07" db="EMBL/GenBank/DDBJ databases">
        <authorList>
            <person name="Mural R.J."/>
            <person name="Istrail S."/>
            <person name="Sutton G."/>
            <person name="Florea L."/>
            <person name="Halpern A.L."/>
            <person name="Mobarry C.M."/>
            <person name="Lippert R."/>
            <person name="Walenz B."/>
            <person name="Shatkay H."/>
            <person name="Dew I."/>
            <person name="Miller J.R."/>
            <person name="Flanigan M.J."/>
            <person name="Edwards N.J."/>
            <person name="Bolanos R."/>
            <person name="Fasulo D."/>
            <person name="Halldorsson B.V."/>
            <person name="Hannenhalli S."/>
            <person name="Turner R."/>
            <person name="Yooseph S."/>
            <person name="Lu F."/>
            <person name="Nusskern D.R."/>
            <person name="Shue B.C."/>
            <person name="Zheng X.H."/>
            <person name="Zhong F."/>
            <person name="Delcher A.L."/>
            <person name="Huson D.H."/>
            <person name="Kravitz S.A."/>
            <person name="Mouchard L."/>
            <person name="Reinert K."/>
            <person name="Remington K.A."/>
            <person name="Clark A.G."/>
            <person name="Waterman M.S."/>
            <person name="Eichler E.E."/>
            <person name="Adams M.D."/>
            <person name="Hunkapiller M.W."/>
            <person name="Myers E.W."/>
            <person name="Venter J.C."/>
        </authorList>
    </citation>
    <scope>NUCLEOTIDE SEQUENCE [LARGE SCALE GENOMIC DNA]</scope>
</reference>
<reference key="3">
    <citation type="journal article" date="2004" name="Genome Res.">
        <title>The status, quality, and expansion of the NIH full-length cDNA project: the Mammalian Gene Collection (MGC).</title>
        <authorList>
            <consortium name="The MGC Project Team"/>
        </authorList>
    </citation>
    <scope>NUCLEOTIDE SEQUENCE [LARGE SCALE MRNA] (ISOFORMS 1 AND 2)</scope>
    <scope>VARIANTS MET-10 AND THR-80</scope>
    <source>
        <tissue>Brain</tissue>
        <tissue>Duodenum</tissue>
    </source>
</reference>
<name>T183A_HUMAN</name>
<sequence>MARGPGPLGRPRPDTVAMPKRGKRLKFRAHDACSGRVTVADYANSDPAVVRSGRVKKAVANAVQQEVKSLCGLEASQVPAEEALSGAGEPCDIIDSSDEMDAQEESIHERTVSRKKKSKRHKEELDGAGGEEYPMDIWLLLASYIRPEDIVNFSLICKNAWTVTCTAAFWTRLYRRHYTLDASLPLRLRPESMEKLRCLRACVIRSLYHMYEPFAARISKNPAIPESTPSTLKNSKCLLFWCRKIVGNRQEPMWEFNFKFKKQSPRLKSKCTGGLQPPVQYEDVHTNPDQDCCLLQVTTLNFIFIPIVMGMIFTLFTINVSTDMRHHRVRLVFQDSPVHGGRKLRSEQGVQVILDPVHSVRLFDWWHPQYPFSLRA</sequence>
<keyword id="KW-0025">Alternative splicing</keyword>
<keyword id="KW-0472">Membrane</keyword>
<keyword id="KW-1267">Proteomics identification</keyword>
<keyword id="KW-1185">Reference proteome</keyword>
<keyword id="KW-0812">Transmembrane</keyword>
<keyword id="KW-1133">Transmembrane helix</keyword>
<protein>
    <recommendedName>
        <fullName>Transmembrane protein 183A</fullName>
    </recommendedName>
</protein>
<comment type="interaction">
    <interactant intactId="EBI-2841953">
        <id>Q8IXX5</id>
    </interactant>
    <interactant intactId="EBI-745127">
        <id>O14879</id>
        <label>IFIT3</label>
    </interactant>
    <organismsDiffer>false</organismsDiffer>
    <experiments>7</experiments>
</comment>
<comment type="subcellular location">
    <subcellularLocation>
        <location evidence="5">Membrane</location>
        <topology evidence="5">Single-pass membrane protein</topology>
    </subcellularLocation>
</comment>
<comment type="alternative products">
    <event type="alternative splicing"/>
    <isoform>
        <id>Q8IXX5-1</id>
        <name>1</name>
        <sequence type="displayed"/>
    </isoform>
    <isoform>
        <id>Q8IXX5-2</id>
        <name>2</name>
        <sequence type="described" ref="VSP_015084"/>
    </isoform>
</comment>
<comment type="similarity">
    <text evidence="5">Belongs to the TMEM183 family.</text>
</comment>
<proteinExistence type="evidence at protein level"/>
<organism>
    <name type="scientific">Homo sapiens</name>
    <name type="common">Human</name>
    <dbReference type="NCBI Taxonomy" id="9606"/>
    <lineage>
        <taxon>Eukaryota</taxon>
        <taxon>Metazoa</taxon>
        <taxon>Chordata</taxon>
        <taxon>Craniata</taxon>
        <taxon>Vertebrata</taxon>
        <taxon>Euteleostomi</taxon>
        <taxon>Mammalia</taxon>
        <taxon>Eutheria</taxon>
        <taxon>Euarchontoglires</taxon>
        <taxon>Primates</taxon>
        <taxon>Haplorrhini</taxon>
        <taxon>Catarrhini</taxon>
        <taxon>Hominidae</taxon>
        <taxon>Homo</taxon>
    </lineage>
</organism>
<dbReference type="EMBL" id="AK291426">
    <property type="protein sequence ID" value="BAF84115.1"/>
    <property type="molecule type" value="mRNA"/>
</dbReference>
<dbReference type="EMBL" id="AK312985">
    <property type="protein sequence ID" value="BAG35822.1"/>
    <property type="molecule type" value="mRNA"/>
</dbReference>
<dbReference type="EMBL" id="CH471067">
    <property type="protein sequence ID" value="EAW91457.1"/>
    <property type="molecule type" value="Genomic_DNA"/>
</dbReference>
<dbReference type="EMBL" id="BC013073">
    <property type="protein sequence ID" value="AAH13073.1"/>
    <property type="molecule type" value="mRNA"/>
</dbReference>
<dbReference type="EMBL" id="BC038952">
    <property type="protein sequence ID" value="AAH38952.1"/>
    <property type="molecule type" value="mRNA"/>
</dbReference>
<dbReference type="EMBL" id="BC067775">
    <property type="protein sequence ID" value="AAH67775.1"/>
    <property type="molecule type" value="mRNA"/>
</dbReference>
<dbReference type="EMBL" id="BC150647">
    <property type="protein sequence ID" value="AAI50648.1"/>
    <property type="molecule type" value="mRNA"/>
</dbReference>
<dbReference type="CCDS" id="CCDS1432.1">
    <molecule id="Q8IXX5-1"/>
</dbReference>
<dbReference type="RefSeq" id="NP_612400.3">
    <molecule id="Q8IXX5-1"/>
    <property type="nucleotide sequence ID" value="NM_138391.4"/>
</dbReference>
<dbReference type="BioGRID" id="124969">
    <property type="interactions" value="30"/>
</dbReference>
<dbReference type="FunCoup" id="Q8IXX5">
    <property type="interactions" value="247"/>
</dbReference>
<dbReference type="IntAct" id="Q8IXX5">
    <property type="interactions" value="29"/>
</dbReference>
<dbReference type="MINT" id="Q8IXX5"/>
<dbReference type="STRING" id="9606.ENSP00000356211"/>
<dbReference type="iPTMnet" id="Q8IXX5"/>
<dbReference type="PhosphoSitePlus" id="Q8IXX5"/>
<dbReference type="BioMuta" id="TMEM183A"/>
<dbReference type="DMDM" id="126302527"/>
<dbReference type="jPOST" id="Q8IXX5"/>
<dbReference type="MassIVE" id="Q8IXX5"/>
<dbReference type="PaxDb" id="9606-ENSP00000356211"/>
<dbReference type="PeptideAtlas" id="Q8IXX5"/>
<dbReference type="ProteomicsDB" id="71074">
    <molecule id="Q8IXX5-1"/>
</dbReference>
<dbReference type="ProteomicsDB" id="71075">
    <molecule id="Q8IXX5-2"/>
</dbReference>
<dbReference type="Pumba" id="Q8IXX5"/>
<dbReference type="Antibodypedia" id="77926">
    <property type="antibodies" value="4 antibodies from 4 providers"/>
</dbReference>
<dbReference type="DNASU" id="92703"/>
<dbReference type="Ensembl" id="ENST00000367242.4">
    <molecule id="Q8IXX5-1"/>
    <property type="protein sequence ID" value="ENSP00000356211.3"/>
    <property type="gene ID" value="ENSG00000163444.12"/>
</dbReference>
<dbReference type="GeneID" id="92703"/>
<dbReference type="KEGG" id="hsa:92703"/>
<dbReference type="MANE-Select" id="ENST00000367242.4">
    <property type="protein sequence ID" value="ENSP00000356211.3"/>
    <property type="RefSeq nucleotide sequence ID" value="NM_138391.6"/>
    <property type="RefSeq protein sequence ID" value="NP_612400.3"/>
</dbReference>
<dbReference type="UCSC" id="uc001gyu.2">
    <molecule id="Q8IXX5-1"/>
    <property type="organism name" value="human"/>
</dbReference>
<dbReference type="AGR" id="HGNC:20173"/>
<dbReference type="CTD" id="92703"/>
<dbReference type="DisGeNET" id="92703"/>
<dbReference type="GeneCards" id="TMEM183A"/>
<dbReference type="HGNC" id="HGNC:20173">
    <property type="gene designation" value="TMEM183A"/>
</dbReference>
<dbReference type="HPA" id="ENSG00000163444">
    <property type="expression patterns" value="Low tissue specificity"/>
</dbReference>
<dbReference type="neXtProt" id="NX_Q8IXX5"/>
<dbReference type="OpenTargets" id="ENSG00000163444"/>
<dbReference type="PharmGKB" id="PA162406090"/>
<dbReference type="VEuPathDB" id="HostDB:ENSG00000163444"/>
<dbReference type="eggNOG" id="ENOG502QS4U">
    <property type="taxonomic scope" value="Eukaryota"/>
</dbReference>
<dbReference type="GeneTree" id="ENSGT00390000009310"/>
<dbReference type="HOGENOM" id="CLU_061444_1_0_1"/>
<dbReference type="InParanoid" id="Q8IXX5"/>
<dbReference type="OMA" id="RFKSKCC"/>
<dbReference type="OrthoDB" id="5955317at2759"/>
<dbReference type="PAN-GO" id="Q8IXX5">
    <property type="GO annotations" value="2 GO annotations based on evolutionary models"/>
</dbReference>
<dbReference type="PhylomeDB" id="Q8IXX5"/>
<dbReference type="TreeFam" id="TF323300"/>
<dbReference type="PathwayCommons" id="Q8IXX5"/>
<dbReference type="SignaLink" id="Q8IXX5"/>
<dbReference type="BioGRID-ORCS" id="92703">
    <property type="hits" value="256 hits in 1124 CRISPR screens"/>
</dbReference>
<dbReference type="ChiTaRS" id="TMEM183A">
    <property type="organism name" value="human"/>
</dbReference>
<dbReference type="GenomeRNAi" id="92703"/>
<dbReference type="Pharos" id="Q8IXX5">
    <property type="development level" value="Tdark"/>
</dbReference>
<dbReference type="PRO" id="PR:Q8IXX5"/>
<dbReference type="Proteomes" id="UP000005640">
    <property type="component" value="Chromosome 1"/>
</dbReference>
<dbReference type="RNAct" id="Q8IXX5">
    <property type="molecule type" value="protein"/>
</dbReference>
<dbReference type="Bgee" id="ENSG00000163444">
    <property type="expression patterns" value="Expressed in rectum and 187 other cell types or tissues"/>
</dbReference>
<dbReference type="GO" id="GO:0016020">
    <property type="term" value="C:membrane"/>
    <property type="evidence" value="ECO:0007669"/>
    <property type="project" value="UniProtKB-SubCell"/>
</dbReference>
<dbReference type="GO" id="GO:0019005">
    <property type="term" value="C:SCF ubiquitin ligase complex"/>
    <property type="evidence" value="ECO:0000318"/>
    <property type="project" value="GO_Central"/>
</dbReference>
<dbReference type="InterPro" id="IPR036047">
    <property type="entry name" value="F-box-like_dom_sf"/>
</dbReference>
<dbReference type="InterPro" id="IPR026509">
    <property type="entry name" value="TMEM183"/>
</dbReference>
<dbReference type="PANTHER" id="PTHR20988">
    <property type="entry name" value="TRANSMEMBRANE PROTEIN 183A-RELATED"/>
    <property type="match status" value="1"/>
</dbReference>
<dbReference type="PANTHER" id="PTHR20988:SF2">
    <property type="entry name" value="TRANSMEMBRANE PROTEIN 183A-RELATED"/>
    <property type="match status" value="1"/>
</dbReference>
<dbReference type="SUPFAM" id="SSF81383">
    <property type="entry name" value="F-box domain"/>
    <property type="match status" value="1"/>
</dbReference>
<gene>
    <name type="primary">TMEM183A</name>
    <name type="synonym">C1orf37</name>
</gene>
<accession>Q8IXX5</accession>
<accession>A8K5W1</accession>
<accession>Q6NW15</accession>
<accession>Q96E06</accession>